<sequence length="92" mass="10745">MTKLEDHLEGIINIFHQYSVRLGHYDTLIKRELKQLITKELPNTLKNTKDQGTIDKIFQNLDANQDEQVSFKEFVVLVTDVLITAHDNIHKE</sequence>
<name>S10AC_PIG</name>
<keyword id="KW-0106">Calcium</keyword>
<keyword id="KW-1003">Cell membrane</keyword>
<keyword id="KW-0186">Copper</keyword>
<keyword id="KW-0963">Cytoplasm</keyword>
<keyword id="KW-0206">Cytoskeleton</keyword>
<keyword id="KW-0903">Direct protein sequencing</keyword>
<keyword id="KW-0391">Immunity</keyword>
<keyword id="KW-0395">Inflammatory response</keyword>
<keyword id="KW-0399">Innate immunity</keyword>
<keyword id="KW-0472">Membrane</keyword>
<keyword id="KW-0479">Metal-binding</keyword>
<keyword id="KW-1185">Reference proteome</keyword>
<keyword id="KW-0677">Repeat</keyword>
<keyword id="KW-0964">Secreted</keyword>
<keyword id="KW-0862">Zinc</keyword>
<gene>
    <name type="primary">S100A12</name>
</gene>
<protein>
    <recommendedName>
        <fullName>Protein S100-A12</fullName>
    </recommendedName>
    <alternativeName>
        <fullName>Calgranulin-C</fullName>
        <shortName>CAGC</shortName>
    </alternativeName>
    <alternativeName>
        <fullName>Extracellular newly identified RAGE-binding protein</fullName>
        <shortName>EN-RAGE</shortName>
    </alternativeName>
    <alternativeName>
        <fullName>S100 calcium-binding protein A12</fullName>
    </alternativeName>
</protein>
<reference key="1">
    <citation type="journal article" date="1994" name="J. Biol. Chem.">
        <title>Primary structure and binding properties of calgranulin C, a novel S100-like calcium-binding protein from pig granulocytes.</title>
        <authorList>
            <person name="Dell'Angelica E.C."/>
            <person name="Schleicher C.H."/>
            <person name="Santome J.A."/>
        </authorList>
    </citation>
    <scope>PROTEIN SEQUENCE OF 2-92</scope>
    <source>
        <tissue>Granulocyte</tissue>
    </source>
</reference>
<comment type="function">
    <text evidence="1">S100A12 is a calcium-, zinc- and copper-binding protein which plays a prominent role in the regulation of inflammatory processes and immune response. Its pro-inflammatory activity involves recruitment of leukocytes, promotion of cytokine and chemokine production, and regulation of leukocyte adhesion and migration. Acts as an alarmin or a danger associated molecular pattern (DAMP) molecule and stimulates innate immune cells via binding to receptor for advanced glycation endproducts (AGER). Binding to AGER activates the MAP-kinase and NF-kappa-B signaling pathways leading to production of pro-inflammatory cytokines and up-regulation of cell adhesion molecules ICAM1 and VCAM1. Acts as a monocyte and mast cell chemoattractant. Can stimulate mast cell degranulation and activation which generates chemokines, histamine and cytokines inducing further leukocyte recruitment to the sites of inflammation. Can inhibit the activity of matrix metalloproteinases; MMP2, MMP3 and MMP9 by chelating Zn(2+) from their active sites (By similarity).</text>
</comment>
<comment type="subunit">
    <text evidence="1">Homodimer. Homooligomer (tetramer or hexamer) in the presence of calcium, zinc and copper ions. Interacts with AGER and both calcium and zinc are essential for the interaction (By similarity). Interacts with CACYBP in a calcium-dependent manner (By similarity).</text>
</comment>
<comment type="subcellular location">
    <subcellularLocation>
        <location evidence="1">Secreted</location>
    </subcellularLocation>
    <subcellularLocation>
        <location evidence="1">Cytoplasm</location>
    </subcellularLocation>
    <subcellularLocation>
        <location evidence="1">Cytoplasm</location>
        <location evidence="1">Cytoskeleton</location>
    </subcellularLocation>
    <subcellularLocation>
        <location evidence="1">Cell membrane</location>
        <topology evidence="1">Peripheral membrane protein</topology>
    </subcellularLocation>
    <text evidence="1">Predominantly localized in the cytoplasm. Upon elevation of the intracellular calcium level, translocated from the cytoplasm to the cytoskeleton and the cell membrane. Upon neutrophil activation is secreted via a microtubule-mediated, alternative pathway (By similarity).</text>
</comment>
<comment type="tissue specificity">
    <text>Found essentially in granulocytes with small amounts found in lymphocytes.</text>
</comment>
<comment type="domain">
    <text evidence="1">The hinge domain contributes significantly to its chemotactic properties.</text>
</comment>
<comment type="miscellaneous">
    <text>In the absence of zinc binds one calcium ion per molecule, in the presence of zinc binds two calcium ions per molecule.</text>
</comment>
<comment type="similarity">
    <text evidence="5">Belongs to the S-100 family.</text>
</comment>
<accession>P80310</accession>
<proteinExistence type="evidence at protein level"/>
<feature type="initiator methionine" description="Removed" evidence="4">
    <location>
        <position position="1"/>
    </location>
</feature>
<feature type="chain" id="PRO_0000144016" description="Protein S100-A12">
    <location>
        <begin position="2"/>
        <end position="92"/>
    </location>
</feature>
<feature type="domain" description="EF-hand 1" evidence="5">
    <location>
        <begin position="13"/>
        <end position="48"/>
    </location>
</feature>
<feature type="domain" description="EF-hand 2" evidence="3">
    <location>
        <begin position="49"/>
        <end position="84"/>
    </location>
</feature>
<feature type="region of interest" description="Hinge domain" evidence="1">
    <location>
        <begin position="38"/>
        <end position="53"/>
    </location>
</feature>
<feature type="binding site" evidence="2">
    <location>
        <position position="16"/>
    </location>
    <ligand>
        <name>Cu cation</name>
        <dbReference type="ChEBI" id="CHEBI:23378"/>
    </ligand>
</feature>
<feature type="binding site" evidence="2">
    <location>
        <position position="16"/>
    </location>
    <ligand>
        <name>Zn(2+)</name>
        <dbReference type="ChEBI" id="CHEBI:29105"/>
    </ligand>
</feature>
<feature type="binding site" evidence="2">
    <location>
        <position position="19"/>
    </location>
    <ligand>
        <name>Ca(2+)</name>
        <dbReference type="ChEBI" id="CHEBI:29108"/>
        <label>1</label>
        <note>low affinity</note>
    </ligand>
</feature>
<feature type="binding site" evidence="2">
    <location>
        <position position="24"/>
    </location>
    <ligand>
        <name>Ca(2+)</name>
        <dbReference type="ChEBI" id="CHEBI:29108"/>
        <label>1</label>
        <note>low affinity</note>
    </ligand>
</feature>
<feature type="binding site" evidence="2">
    <location>
        <position position="26"/>
    </location>
    <ligand>
        <name>Cu cation</name>
        <dbReference type="ChEBI" id="CHEBI:23378"/>
    </ligand>
</feature>
<feature type="binding site" evidence="2">
    <location>
        <position position="26"/>
    </location>
    <ligand>
        <name>Zn(2+)</name>
        <dbReference type="ChEBI" id="CHEBI:29105"/>
    </ligand>
</feature>
<feature type="binding site" evidence="2">
    <location>
        <position position="27"/>
    </location>
    <ligand>
        <name>Ca(2+)</name>
        <dbReference type="ChEBI" id="CHEBI:29108"/>
        <label>1</label>
        <note>low affinity</note>
    </ligand>
</feature>
<feature type="binding site" evidence="2">
    <location>
        <position position="32"/>
    </location>
    <ligand>
        <name>Ca(2+)</name>
        <dbReference type="ChEBI" id="CHEBI:29108"/>
        <label>1</label>
        <note>low affinity</note>
    </ligand>
</feature>
<feature type="binding site" evidence="2">
    <location>
        <position position="62"/>
    </location>
    <ligand>
        <name>Ca(2+)</name>
        <dbReference type="ChEBI" id="CHEBI:29108"/>
        <label>2</label>
        <note>high affinity</note>
    </ligand>
</feature>
<feature type="binding site" evidence="2">
    <location>
        <position position="64"/>
    </location>
    <ligand>
        <name>Ca(2+)</name>
        <dbReference type="ChEBI" id="CHEBI:29108"/>
        <label>2</label>
        <note>high affinity</note>
    </ligand>
</feature>
<feature type="binding site" evidence="2">
    <location>
        <position position="66"/>
    </location>
    <ligand>
        <name>Ca(2+)</name>
        <dbReference type="ChEBI" id="CHEBI:29108"/>
        <label>2</label>
        <note>high affinity</note>
    </ligand>
</feature>
<feature type="binding site" evidence="2">
    <location>
        <position position="68"/>
    </location>
    <ligand>
        <name>Ca(2+)</name>
        <dbReference type="ChEBI" id="CHEBI:29108"/>
        <label>2</label>
        <note>high affinity</note>
    </ligand>
</feature>
<feature type="binding site" evidence="2">
    <location>
        <position position="73"/>
    </location>
    <ligand>
        <name>Ca(2+)</name>
        <dbReference type="ChEBI" id="CHEBI:29108"/>
        <label>2</label>
        <note>high affinity</note>
    </ligand>
</feature>
<feature type="binding site" evidence="2">
    <location>
        <position position="86"/>
    </location>
    <ligand>
        <name>Cu cation</name>
        <dbReference type="ChEBI" id="CHEBI:23378"/>
    </ligand>
</feature>
<feature type="binding site" evidence="2">
    <location>
        <position position="86"/>
    </location>
    <ligand>
        <name>Zn(2+)</name>
        <dbReference type="ChEBI" id="CHEBI:29105"/>
    </ligand>
</feature>
<feature type="binding site" evidence="2">
    <location>
        <position position="90"/>
    </location>
    <ligand>
        <name>Cu cation</name>
        <dbReference type="ChEBI" id="CHEBI:23378"/>
    </ligand>
</feature>
<feature type="binding site" evidence="2">
    <location>
        <position position="90"/>
    </location>
    <ligand>
        <name>Zn(2+)</name>
        <dbReference type="ChEBI" id="CHEBI:29105"/>
    </ligand>
</feature>
<dbReference type="PIR" id="A55406">
    <property type="entry name" value="A55406"/>
</dbReference>
<dbReference type="RefSeq" id="NP_001153744.1">
    <property type="nucleotide sequence ID" value="NM_001160272.1"/>
</dbReference>
<dbReference type="SMR" id="P80310"/>
<dbReference type="FunCoup" id="P80310">
    <property type="interactions" value="34"/>
</dbReference>
<dbReference type="STRING" id="9823.ENSSSCP00000032082"/>
<dbReference type="PaxDb" id="9823-ENSSSCP00000007024"/>
<dbReference type="PeptideAtlas" id="P80310"/>
<dbReference type="Ensembl" id="ENSSSCT00015028578.1">
    <property type="protein sequence ID" value="ENSSSCP00015011189.1"/>
    <property type="gene ID" value="ENSSSCG00015021486.1"/>
</dbReference>
<dbReference type="Ensembl" id="ENSSSCT00015028675.1">
    <property type="protein sequence ID" value="ENSSSCP00015011241.1"/>
    <property type="gene ID" value="ENSSSCG00015021486.1"/>
</dbReference>
<dbReference type="Ensembl" id="ENSSSCT00070056169.1">
    <property type="protein sequence ID" value="ENSSSCP00070047719.1"/>
    <property type="gene ID" value="ENSSSCG00070027991.1"/>
</dbReference>
<dbReference type="GeneID" id="100301483"/>
<dbReference type="KEGG" id="ssc:100301483"/>
<dbReference type="CTD" id="6283"/>
<dbReference type="eggNOG" id="ENOG502SA01">
    <property type="taxonomic scope" value="Eukaryota"/>
</dbReference>
<dbReference type="HOGENOM" id="CLU_138624_6_2_1"/>
<dbReference type="InParanoid" id="P80310"/>
<dbReference type="OMA" id="HEHLHEV"/>
<dbReference type="OrthoDB" id="9909924at2759"/>
<dbReference type="TreeFam" id="TF332727"/>
<dbReference type="Reactome" id="R-SSC-445989">
    <property type="pathway name" value="TAK1-dependent IKK and NF-kappa-B activation"/>
</dbReference>
<dbReference type="Reactome" id="R-SSC-6798695">
    <property type="pathway name" value="Neutrophil degranulation"/>
</dbReference>
<dbReference type="Reactome" id="R-SSC-879415">
    <property type="pathway name" value="Advanced glycosylation endproduct receptor signaling"/>
</dbReference>
<dbReference type="Reactome" id="R-SSC-933542">
    <property type="pathway name" value="TRAF6 mediated NF-kB activation"/>
</dbReference>
<dbReference type="Proteomes" id="UP000008227">
    <property type="component" value="Unplaced"/>
</dbReference>
<dbReference type="Proteomes" id="UP000314985">
    <property type="component" value="Chromosome 4"/>
</dbReference>
<dbReference type="Proteomes" id="UP000694570">
    <property type="component" value="Unplaced"/>
</dbReference>
<dbReference type="Proteomes" id="UP000694571">
    <property type="component" value="Unplaced"/>
</dbReference>
<dbReference type="Proteomes" id="UP000694720">
    <property type="component" value="Unplaced"/>
</dbReference>
<dbReference type="Proteomes" id="UP000694722">
    <property type="component" value="Unplaced"/>
</dbReference>
<dbReference type="Proteomes" id="UP000694723">
    <property type="component" value="Unplaced"/>
</dbReference>
<dbReference type="Proteomes" id="UP000694724">
    <property type="component" value="Unplaced"/>
</dbReference>
<dbReference type="Proteomes" id="UP000694725">
    <property type="component" value="Unplaced"/>
</dbReference>
<dbReference type="Proteomes" id="UP000694726">
    <property type="component" value="Unplaced"/>
</dbReference>
<dbReference type="Proteomes" id="UP000694727">
    <property type="component" value="Unplaced"/>
</dbReference>
<dbReference type="Proteomes" id="UP000694728">
    <property type="component" value="Unplaced"/>
</dbReference>
<dbReference type="GO" id="GO:0005737">
    <property type="term" value="C:cytoplasm"/>
    <property type="evidence" value="ECO:0000318"/>
    <property type="project" value="GO_Central"/>
</dbReference>
<dbReference type="GO" id="GO:0005856">
    <property type="term" value="C:cytoskeleton"/>
    <property type="evidence" value="ECO:0007669"/>
    <property type="project" value="UniProtKB-SubCell"/>
</dbReference>
<dbReference type="GO" id="GO:0005576">
    <property type="term" value="C:extracellular region"/>
    <property type="evidence" value="ECO:0007669"/>
    <property type="project" value="UniProtKB-SubCell"/>
</dbReference>
<dbReference type="GO" id="GO:0005886">
    <property type="term" value="C:plasma membrane"/>
    <property type="evidence" value="ECO:0007669"/>
    <property type="project" value="UniProtKB-SubCell"/>
</dbReference>
<dbReference type="GO" id="GO:0005509">
    <property type="term" value="F:calcium ion binding"/>
    <property type="evidence" value="ECO:0000314"/>
    <property type="project" value="UniProtKB"/>
</dbReference>
<dbReference type="GO" id="GO:0048306">
    <property type="term" value="F:calcium-dependent protein binding"/>
    <property type="evidence" value="ECO:0000318"/>
    <property type="project" value="GO_Central"/>
</dbReference>
<dbReference type="GO" id="GO:0050786">
    <property type="term" value="F:RAGE receptor binding"/>
    <property type="evidence" value="ECO:0000318"/>
    <property type="project" value="GO_Central"/>
</dbReference>
<dbReference type="GO" id="GO:0008270">
    <property type="term" value="F:zinc ion binding"/>
    <property type="evidence" value="ECO:0000314"/>
    <property type="project" value="UniProtKB"/>
</dbReference>
<dbReference type="GO" id="GO:0061844">
    <property type="term" value="P:antimicrobial humoral immune response mediated by antimicrobial peptide"/>
    <property type="evidence" value="ECO:0000318"/>
    <property type="project" value="GO_Central"/>
</dbReference>
<dbReference type="GO" id="GO:0043542">
    <property type="term" value="P:endothelial cell migration"/>
    <property type="evidence" value="ECO:0000318"/>
    <property type="project" value="GO_Central"/>
</dbReference>
<dbReference type="GO" id="GO:0006954">
    <property type="term" value="P:inflammatory response"/>
    <property type="evidence" value="ECO:0007669"/>
    <property type="project" value="UniProtKB-KW"/>
</dbReference>
<dbReference type="GO" id="GO:0045087">
    <property type="term" value="P:innate immune response"/>
    <property type="evidence" value="ECO:0007669"/>
    <property type="project" value="UniProtKB-KW"/>
</dbReference>
<dbReference type="GO" id="GO:0043123">
    <property type="term" value="P:positive regulation of canonical NF-kappaB signal transduction"/>
    <property type="evidence" value="ECO:0000318"/>
    <property type="project" value="GO_Central"/>
</dbReference>
<dbReference type="CDD" id="cd05030">
    <property type="entry name" value="calgranulins"/>
    <property type="match status" value="1"/>
</dbReference>
<dbReference type="FunFam" id="1.10.238.10:FF:000044">
    <property type="entry name" value="Protein S100"/>
    <property type="match status" value="1"/>
</dbReference>
<dbReference type="Gene3D" id="1.10.238.10">
    <property type="entry name" value="EF-hand"/>
    <property type="match status" value="1"/>
</dbReference>
<dbReference type="InterPro" id="IPR011992">
    <property type="entry name" value="EF-hand-dom_pair"/>
</dbReference>
<dbReference type="InterPro" id="IPR002048">
    <property type="entry name" value="EF_hand_dom"/>
</dbReference>
<dbReference type="InterPro" id="IPR001751">
    <property type="entry name" value="S100/CaBP7/8-like_CS"/>
</dbReference>
<dbReference type="InterPro" id="IPR013787">
    <property type="entry name" value="S100_Ca-bd_sub"/>
</dbReference>
<dbReference type="PANTHER" id="PTHR11639:SF77">
    <property type="entry name" value="PROTEIN S100-A12"/>
    <property type="match status" value="1"/>
</dbReference>
<dbReference type="PANTHER" id="PTHR11639">
    <property type="entry name" value="S100 CALCIUM-BINDING PROTEIN"/>
    <property type="match status" value="1"/>
</dbReference>
<dbReference type="Pfam" id="PF01023">
    <property type="entry name" value="S_100"/>
    <property type="match status" value="1"/>
</dbReference>
<dbReference type="SMART" id="SM00054">
    <property type="entry name" value="EFh"/>
    <property type="match status" value="1"/>
</dbReference>
<dbReference type="SMART" id="SM01394">
    <property type="entry name" value="S_100"/>
    <property type="match status" value="1"/>
</dbReference>
<dbReference type="SUPFAM" id="SSF47473">
    <property type="entry name" value="EF-hand"/>
    <property type="match status" value="1"/>
</dbReference>
<dbReference type="PROSITE" id="PS50222">
    <property type="entry name" value="EF_HAND_2"/>
    <property type="match status" value="1"/>
</dbReference>
<dbReference type="PROSITE" id="PS00303">
    <property type="entry name" value="S100_CABP"/>
    <property type="match status" value="1"/>
</dbReference>
<evidence type="ECO:0000250" key="1"/>
<evidence type="ECO:0000250" key="2">
    <source>
        <dbReference type="UniProtKB" id="P80511"/>
    </source>
</evidence>
<evidence type="ECO:0000255" key="3">
    <source>
        <dbReference type="PROSITE-ProRule" id="PRU00448"/>
    </source>
</evidence>
<evidence type="ECO:0000269" key="4">
    <source>
    </source>
</evidence>
<evidence type="ECO:0000305" key="5"/>
<organism>
    <name type="scientific">Sus scrofa</name>
    <name type="common">Pig</name>
    <dbReference type="NCBI Taxonomy" id="9823"/>
    <lineage>
        <taxon>Eukaryota</taxon>
        <taxon>Metazoa</taxon>
        <taxon>Chordata</taxon>
        <taxon>Craniata</taxon>
        <taxon>Vertebrata</taxon>
        <taxon>Euteleostomi</taxon>
        <taxon>Mammalia</taxon>
        <taxon>Eutheria</taxon>
        <taxon>Laurasiatheria</taxon>
        <taxon>Artiodactyla</taxon>
        <taxon>Suina</taxon>
        <taxon>Suidae</taxon>
        <taxon>Sus</taxon>
    </lineage>
</organism>